<name>URED_HAEIE</name>
<accession>A5U9W0</accession>
<sequence>MNSKLSLSTKLSSSGKTQLAEYFAKPPFKVITLPSYDDAWANGLNAMQMSSSPGVLAGDVLEIDISLAKLTALSLNTQAFTRVQAMNEGDSAMQTTHILLAENSRLFYLPHPLVLHKDSVFKQQTHIEMGEQSELIYGEIVAIGRVLNDERFAFRQFSSHLKIYTLQDDGKKRPLVSDCIQWLPSKMNLTALSQMENYSHQGSLTYLNLAKNNAEIKQQVQALQQQSAEEKDLLIGISQLNEYGLMVRVLGCRAEQIQKLFEKIGRLLKSV</sequence>
<evidence type="ECO:0000255" key="1">
    <source>
        <dbReference type="HAMAP-Rule" id="MF_01384"/>
    </source>
</evidence>
<dbReference type="EMBL" id="CP000671">
    <property type="protein sequence ID" value="ABQ97561.1"/>
    <property type="molecule type" value="Genomic_DNA"/>
</dbReference>
<dbReference type="SMR" id="A5U9W0"/>
<dbReference type="KEGG" id="hip:CGSHiEE_00315"/>
<dbReference type="HOGENOM" id="CLU_056339_6_0_6"/>
<dbReference type="GO" id="GO:0005737">
    <property type="term" value="C:cytoplasm"/>
    <property type="evidence" value="ECO:0007669"/>
    <property type="project" value="UniProtKB-SubCell"/>
</dbReference>
<dbReference type="GO" id="GO:0016151">
    <property type="term" value="F:nickel cation binding"/>
    <property type="evidence" value="ECO:0007669"/>
    <property type="project" value="UniProtKB-UniRule"/>
</dbReference>
<dbReference type="HAMAP" id="MF_01384">
    <property type="entry name" value="UreD"/>
    <property type="match status" value="1"/>
</dbReference>
<dbReference type="InterPro" id="IPR002669">
    <property type="entry name" value="UreD"/>
</dbReference>
<dbReference type="PANTHER" id="PTHR33643">
    <property type="entry name" value="UREASE ACCESSORY PROTEIN D"/>
    <property type="match status" value="1"/>
</dbReference>
<dbReference type="PANTHER" id="PTHR33643:SF1">
    <property type="entry name" value="UREASE ACCESSORY PROTEIN D"/>
    <property type="match status" value="1"/>
</dbReference>
<dbReference type="Pfam" id="PF01774">
    <property type="entry name" value="UreD"/>
    <property type="match status" value="1"/>
</dbReference>
<protein>
    <recommendedName>
        <fullName evidence="1">Urease accessory protein UreD</fullName>
    </recommendedName>
</protein>
<comment type="function">
    <text evidence="1">Required for maturation of urease via the functional incorporation of the urease nickel metallocenter.</text>
</comment>
<comment type="subunit">
    <text evidence="1">UreD, UreF and UreG form a complex that acts as a GTP-hydrolysis-dependent molecular chaperone, activating the urease apoprotein by helping to assemble the nickel containing metallocenter of UreC. The UreE protein probably delivers the nickel.</text>
</comment>
<comment type="subcellular location">
    <subcellularLocation>
        <location evidence="1">Cytoplasm</location>
    </subcellularLocation>
</comment>
<comment type="similarity">
    <text evidence="1">Belongs to the UreD family.</text>
</comment>
<keyword id="KW-0143">Chaperone</keyword>
<keyword id="KW-0963">Cytoplasm</keyword>
<keyword id="KW-0996">Nickel insertion</keyword>
<organism>
    <name type="scientific">Haemophilus influenzae (strain PittEE)</name>
    <dbReference type="NCBI Taxonomy" id="374930"/>
    <lineage>
        <taxon>Bacteria</taxon>
        <taxon>Pseudomonadati</taxon>
        <taxon>Pseudomonadota</taxon>
        <taxon>Gammaproteobacteria</taxon>
        <taxon>Pasteurellales</taxon>
        <taxon>Pasteurellaceae</taxon>
        <taxon>Haemophilus</taxon>
    </lineage>
</organism>
<reference key="1">
    <citation type="journal article" date="2007" name="Genome Biol.">
        <title>Characterization and modeling of the Haemophilus influenzae core and supragenomes based on the complete genomic sequences of Rd and 12 clinical nontypeable strains.</title>
        <authorList>
            <person name="Hogg J.S."/>
            <person name="Hu F.Z."/>
            <person name="Janto B."/>
            <person name="Boissy R."/>
            <person name="Hayes J."/>
            <person name="Keefe R."/>
            <person name="Post J.C."/>
            <person name="Ehrlich G.D."/>
        </authorList>
    </citation>
    <scope>NUCLEOTIDE SEQUENCE [LARGE SCALE GENOMIC DNA]</scope>
    <source>
        <strain>PittEE</strain>
    </source>
</reference>
<feature type="chain" id="PRO_1000145090" description="Urease accessory protein UreD">
    <location>
        <begin position="1"/>
        <end position="271"/>
    </location>
</feature>
<gene>
    <name evidence="1" type="primary">ureD</name>
    <name type="ordered locus">CGSHiEE_00315</name>
</gene>
<proteinExistence type="inferred from homology"/>